<gene>
    <name type="ordered locus">AF_1733</name>
</gene>
<keyword id="KW-1185">Reference proteome</keyword>
<reference key="1">
    <citation type="journal article" date="1997" name="Nature">
        <title>The complete genome sequence of the hyperthermophilic, sulphate-reducing archaeon Archaeoglobus fulgidus.</title>
        <authorList>
            <person name="Klenk H.-P."/>
            <person name="Clayton R.A."/>
            <person name="Tomb J.-F."/>
            <person name="White O."/>
            <person name="Nelson K.E."/>
            <person name="Ketchum K.A."/>
            <person name="Dodson R.J."/>
            <person name="Gwinn M.L."/>
            <person name="Hickey E.K."/>
            <person name="Peterson J.D."/>
            <person name="Richardson D.L."/>
            <person name="Kerlavage A.R."/>
            <person name="Graham D.E."/>
            <person name="Kyrpides N.C."/>
            <person name="Fleischmann R.D."/>
            <person name="Quackenbush J."/>
            <person name="Lee N.H."/>
            <person name="Sutton G.G."/>
            <person name="Gill S.R."/>
            <person name="Kirkness E.F."/>
            <person name="Dougherty B.A."/>
            <person name="McKenney K."/>
            <person name="Adams M.D."/>
            <person name="Loftus B.J."/>
            <person name="Peterson S.N."/>
            <person name="Reich C.I."/>
            <person name="McNeil L.K."/>
            <person name="Badger J.H."/>
            <person name="Glodek A."/>
            <person name="Zhou L."/>
            <person name="Overbeek R."/>
            <person name="Gocayne J.D."/>
            <person name="Weidman J.F."/>
            <person name="McDonald L.A."/>
            <person name="Utterback T.R."/>
            <person name="Cotton M.D."/>
            <person name="Spriggs T."/>
            <person name="Artiach P."/>
            <person name="Kaine B.P."/>
            <person name="Sykes S.M."/>
            <person name="Sadow P.W."/>
            <person name="D'Andrea K.P."/>
            <person name="Bowman C."/>
            <person name="Fujii C."/>
            <person name="Garland S.A."/>
            <person name="Mason T.M."/>
            <person name="Olsen G.J."/>
            <person name="Fraser C.M."/>
            <person name="Smith H.O."/>
            <person name="Woese C.R."/>
            <person name="Venter J.C."/>
        </authorList>
    </citation>
    <scope>NUCLEOTIDE SEQUENCE [LARGE SCALE GENOMIC DNA]</scope>
    <source>
        <strain>ATCC 49558 / DSM 4304 / JCM 9628 / NBRC 100126 / VC-16</strain>
    </source>
</reference>
<organism>
    <name type="scientific">Archaeoglobus fulgidus (strain ATCC 49558 / DSM 4304 / JCM 9628 / NBRC 100126 / VC-16)</name>
    <dbReference type="NCBI Taxonomy" id="224325"/>
    <lineage>
        <taxon>Archaea</taxon>
        <taxon>Methanobacteriati</taxon>
        <taxon>Methanobacteriota</taxon>
        <taxon>Archaeoglobi</taxon>
        <taxon>Archaeoglobales</taxon>
        <taxon>Archaeoglobaceae</taxon>
        <taxon>Archaeoglobus</taxon>
    </lineage>
</organism>
<feature type="chain" id="PRO_0000107407" description="Uncharacterized protein AF_1733">
    <location>
        <begin position="1"/>
        <end position="45"/>
    </location>
</feature>
<name>Y1733_ARCFU</name>
<proteinExistence type="predicted"/>
<accession>O28541</accession>
<dbReference type="EMBL" id="AE000782">
    <property type="protein sequence ID" value="AAB89518.1"/>
    <property type="molecule type" value="Genomic_DNA"/>
</dbReference>
<dbReference type="PIR" id="D69466">
    <property type="entry name" value="D69466"/>
</dbReference>
<dbReference type="SMR" id="O28541"/>
<dbReference type="STRING" id="224325.AF_1733"/>
<dbReference type="PaxDb" id="224325-AF_1733"/>
<dbReference type="EnsemblBacteria" id="AAB89518">
    <property type="protein sequence ID" value="AAB89518"/>
    <property type="gene ID" value="AF_1733"/>
</dbReference>
<dbReference type="KEGG" id="afu:AF_1733"/>
<dbReference type="eggNOG" id="arCOG04856">
    <property type="taxonomic scope" value="Archaea"/>
</dbReference>
<dbReference type="HOGENOM" id="CLU_200895_2_2_2"/>
<dbReference type="Proteomes" id="UP000002199">
    <property type="component" value="Chromosome"/>
</dbReference>
<dbReference type="InterPro" id="IPR019300">
    <property type="entry name" value="CooT"/>
</dbReference>
<dbReference type="Pfam" id="PF10133">
    <property type="entry name" value="CooT"/>
    <property type="match status" value="1"/>
</dbReference>
<protein>
    <recommendedName>
        <fullName>Uncharacterized protein AF_1733</fullName>
    </recommendedName>
</protein>
<sequence length="45" mass="5241">MEDVVRIVVEGEKVKMWDILGDYREVRGRVVEMDLVGHKIILEGE</sequence>